<name>SELO_CLOBB</name>
<reference key="1">
    <citation type="submission" date="2008-04" db="EMBL/GenBank/DDBJ databases">
        <title>Complete sequence of Clostridium botulinum strain Eklund.</title>
        <authorList>
            <person name="Brinkac L.M."/>
            <person name="Brown J.L."/>
            <person name="Bruce D."/>
            <person name="Detter C."/>
            <person name="Munk C."/>
            <person name="Smith L.A."/>
            <person name="Smith T.J."/>
            <person name="Sutton G."/>
            <person name="Brettin T.S."/>
        </authorList>
    </citation>
    <scope>NUCLEOTIDE SEQUENCE [LARGE SCALE GENOMIC DNA]</scope>
    <source>
        <strain>Eklund 17B / Type B</strain>
    </source>
</reference>
<organism>
    <name type="scientific">Clostridium botulinum (strain Eklund 17B / Type B)</name>
    <dbReference type="NCBI Taxonomy" id="935198"/>
    <lineage>
        <taxon>Bacteria</taxon>
        <taxon>Bacillati</taxon>
        <taxon>Bacillota</taxon>
        <taxon>Clostridia</taxon>
        <taxon>Eubacteriales</taxon>
        <taxon>Clostridiaceae</taxon>
        <taxon>Clostridium</taxon>
    </lineage>
</organism>
<keyword id="KW-0067">ATP-binding</keyword>
<keyword id="KW-0460">Magnesium</keyword>
<keyword id="KW-0464">Manganese</keyword>
<keyword id="KW-0479">Metal-binding</keyword>
<keyword id="KW-0547">Nucleotide-binding</keyword>
<keyword id="KW-0548">Nucleotidyltransferase</keyword>
<keyword id="KW-0808">Transferase</keyword>
<comment type="function">
    <text evidence="1">Nucleotidyltransferase involved in the post-translational modification of proteins. It can catalyze the addition of adenosine monophosphate (AMP) or uridine monophosphate (UMP) to a protein, resulting in modifications known as AMPylation and UMPylation.</text>
</comment>
<comment type="catalytic activity">
    <reaction evidence="1">
        <text>L-seryl-[protein] + ATP = 3-O-(5'-adenylyl)-L-seryl-[protein] + diphosphate</text>
        <dbReference type="Rhea" id="RHEA:58120"/>
        <dbReference type="Rhea" id="RHEA-COMP:9863"/>
        <dbReference type="Rhea" id="RHEA-COMP:15073"/>
        <dbReference type="ChEBI" id="CHEBI:29999"/>
        <dbReference type="ChEBI" id="CHEBI:30616"/>
        <dbReference type="ChEBI" id="CHEBI:33019"/>
        <dbReference type="ChEBI" id="CHEBI:142516"/>
        <dbReference type="EC" id="2.7.7.108"/>
    </reaction>
</comment>
<comment type="catalytic activity">
    <reaction evidence="1">
        <text>L-threonyl-[protein] + ATP = 3-O-(5'-adenylyl)-L-threonyl-[protein] + diphosphate</text>
        <dbReference type="Rhea" id="RHEA:54292"/>
        <dbReference type="Rhea" id="RHEA-COMP:11060"/>
        <dbReference type="Rhea" id="RHEA-COMP:13847"/>
        <dbReference type="ChEBI" id="CHEBI:30013"/>
        <dbReference type="ChEBI" id="CHEBI:30616"/>
        <dbReference type="ChEBI" id="CHEBI:33019"/>
        <dbReference type="ChEBI" id="CHEBI:138113"/>
        <dbReference type="EC" id="2.7.7.108"/>
    </reaction>
</comment>
<comment type="catalytic activity">
    <reaction evidence="1">
        <text>L-tyrosyl-[protein] + ATP = O-(5'-adenylyl)-L-tyrosyl-[protein] + diphosphate</text>
        <dbReference type="Rhea" id="RHEA:54288"/>
        <dbReference type="Rhea" id="RHEA-COMP:10136"/>
        <dbReference type="Rhea" id="RHEA-COMP:13846"/>
        <dbReference type="ChEBI" id="CHEBI:30616"/>
        <dbReference type="ChEBI" id="CHEBI:33019"/>
        <dbReference type="ChEBI" id="CHEBI:46858"/>
        <dbReference type="ChEBI" id="CHEBI:83624"/>
        <dbReference type="EC" id="2.7.7.108"/>
    </reaction>
</comment>
<comment type="catalytic activity">
    <reaction evidence="1">
        <text>L-histidyl-[protein] + UTP = N(tele)-(5'-uridylyl)-L-histidyl-[protein] + diphosphate</text>
        <dbReference type="Rhea" id="RHEA:83891"/>
        <dbReference type="Rhea" id="RHEA-COMP:9745"/>
        <dbReference type="Rhea" id="RHEA-COMP:20239"/>
        <dbReference type="ChEBI" id="CHEBI:29979"/>
        <dbReference type="ChEBI" id="CHEBI:33019"/>
        <dbReference type="ChEBI" id="CHEBI:46398"/>
        <dbReference type="ChEBI" id="CHEBI:233474"/>
    </reaction>
</comment>
<comment type="catalytic activity">
    <reaction evidence="1">
        <text>L-seryl-[protein] + UTP = O-(5'-uridylyl)-L-seryl-[protein] + diphosphate</text>
        <dbReference type="Rhea" id="RHEA:64604"/>
        <dbReference type="Rhea" id="RHEA-COMP:9863"/>
        <dbReference type="Rhea" id="RHEA-COMP:16635"/>
        <dbReference type="ChEBI" id="CHEBI:29999"/>
        <dbReference type="ChEBI" id="CHEBI:33019"/>
        <dbReference type="ChEBI" id="CHEBI:46398"/>
        <dbReference type="ChEBI" id="CHEBI:156051"/>
    </reaction>
</comment>
<comment type="catalytic activity">
    <reaction evidence="1">
        <text>L-tyrosyl-[protein] + UTP = O-(5'-uridylyl)-L-tyrosyl-[protein] + diphosphate</text>
        <dbReference type="Rhea" id="RHEA:83887"/>
        <dbReference type="Rhea" id="RHEA-COMP:10136"/>
        <dbReference type="Rhea" id="RHEA-COMP:20238"/>
        <dbReference type="ChEBI" id="CHEBI:33019"/>
        <dbReference type="ChEBI" id="CHEBI:46398"/>
        <dbReference type="ChEBI" id="CHEBI:46858"/>
        <dbReference type="ChEBI" id="CHEBI:90602"/>
    </reaction>
</comment>
<comment type="cofactor">
    <cofactor evidence="1">
        <name>Mg(2+)</name>
        <dbReference type="ChEBI" id="CHEBI:18420"/>
    </cofactor>
    <cofactor evidence="1">
        <name>Mn(2+)</name>
        <dbReference type="ChEBI" id="CHEBI:29035"/>
    </cofactor>
</comment>
<comment type="similarity">
    <text evidence="1">Belongs to the SELO family.</text>
</comment>
<gene>
    <name evidence="1" type="primary">ydiU</name>
    <name evidence="1" type="synonym">selO</name>
    <name type="ordered locus">CLL_A1414</name>
</gene>
<protein>
    <recommendedName>
        <fullName evidence="1">Protein nucleotidyltransferase YdiU</fullName>
        <ecNumber evidence="1">2.7.7.-</ecNumber>
    </recommendedName>
    <alternativeName>
        <fullName evidence="1">Protein adenylyltransferase YdiU</fullName>
        <ecNumber evidence="1">2.7.7.108</ecNumber>
    </alternativeName>
    <alternativeName>
        <fullName evidence="1">Protein uridylyltransferase YdiU</fullName>
        <ecNumber evidence="1">2.7.7.-</ecNumber>
    </alternativeName>
</protein>
<proteinExistence type="inferred from homology"/>
<sequence>MKNKEVIVNNYLNLENTYIKLPKKLFSEQNPSEVKSAKLEVFNESLASDLGLSEEFLQSDDGVAFFAGNKILEGTVPIAQAYAGHQFGHFTMLGDGRAILIGELKSQNGERFDIQLKGAGRTPYSRGGDGKATLGPMLREYIISEGMYGLGIPTTRSLAVVSTGEDVMREEILQGAVLTRIAKSHIRVGTFQFVSNWGTVEELKALADYTLNRHFKKAEYEGNPYIYLLNEVIKSQAKLISKWQLVGFIHGVMNTDNVTISGETIDYGPCAFMDVYDPDTVFSSIDIKGRYAYGNQPKIGAWNLARFAETLLPLLDKNLEVAVEIAQNSISKYSDLYNKYWYTGMRAKLGIFNEEEEDKKLIQSLLTIMKRFKSDYTNTFRNLTLGNLSDIDVFTSEEFKTWYELWKERLTRQDQSSEESNKLMKKNNPTVIPRNYRVEEALVAAVKDNDYCVMQRLLDVLKDPYDYSNMNEYYSTLPKSTSCAYKTYCGT</sequence>
<accession>B2TJM9</accession>
<evidence type="ECO:0000255" key="1">
    <source>
        <dbReference type="HAMAP-Rule" id="MF_00692"/>
    </source>
</evidence>
<feature type="chain" id="PRO_1000132100" description="Protein nucleotidyltransferase YdiU">
    <location>
        <begin position="1"/>
        <end position="491"/>
    </location>
</feature>
<feature type="active site" description="Proton acceptor" evidence="1">
    <location>
        <position position="256"/>
    </location>
</feature>
<feature type="binding site" evidence="1">
    <location>
        <position position="94"/>
    </location>
    <ligand>
        <name>ATP</name>
        <dbReference type="ChEBI" id="CHEBI:30616"/>
    </ligand>
</feature>
<feature type="binding site" evidence="1">
    <location>
        <position position="96"/>
    </location>
    <ligand>
        <name>ATP</name>
        <dbReference type="ChEBI" id="CHEBI:30616"/>
    </ligand>
</feature>
<feature type="binding site" evidence="1">
    <location>
        <position position="97"/>
    </location>
    <ligand>
        <name>ATP</name>
        <dbReference type="ChEBI" id="CHEBI:30616"/>
    </ligand>
</feature>
<feature type="binding site" evidence="1">
    <location>
        <position position="117"/>
    </location>
    <ligand>
        <name>ATP</name>
        <dbReference type="ChEBI" id="CHEBI:30616"/>
    </ligand>
</feature>
<feature type="binding site" evidence="1">
    <location>
        <position position="129"/>
    </location>
    <ligand>
        <name>ATP</name>
        <dbReference type="ChEBI" id="CHEBI:30616"/>
    </ligand>
</feature>
<feature type="binding site" evidence="1">
    <location>
        <position position="130"/>
    </location>
    <ligand>
        <name>ATP</name>
        <dbReference type="ChEBI" id="CHEBI:30616"/>
    </ligand>
</feature>
<feature type="binding site" evidence="1">
    <location>
        <position position="180"/>
    </location>
    <ligand>
        <name>ATP</name>
        <dbReference type="ChEBI" id="CHEBI:30616"/>
    </ligand>
</feature>
<feature type="binding site" evidence="1">
    <location>
        <position position="187"/>
    </location>
    <ligand>
        <name>ATP</name>
        <dbReference type="ChEBI" id="CHEBI:30616"/>
    </ligand>
</feature>
<feature type="binding site" evidence="1">
    <location>
        <position position="257"/>
    </location>
    <ligand>
        <name>Mg(2+)</name>
        <dbReference type="ChEBI" id="CHEBI:18420"/>
    </ligand>
</feature>
<feature type="binding site" evidence="1">
    <location>
        <position position="266"/>
    </location>
    <ligand>
        <name>ATP</name>
        <dbReference type="ChEBI" id="CHEBI:30616"/>
    </ligand>
</feature>
<feature type="binding site" evidence="1">
    <location>
        <position position="266"/>
    </location>
    <ligand>
        <name>Mg(2+)</name>
        <dbReference type="ChEBI" id="CHEBI:18420"/>
    </ligand>
</feature>
<dbReference type="EC" id="2.7.7.-" evidence="1"/>
<dbReference type="EC" id="2.7.7.108" evidence="1"/>
<dbReference type="EMBL" id="CP001056">
    <property type="protein sequence ID" value="ACD23191.1"/>
    <property type="molecule type" value="Genomic_DNA"/>
</dbReference>
<dbReference type="SMR" id="B2TJM9"/>
<dbReference type="KEGG" id="cbk:CLL_A1414"/>
<dbReference type="PATRIC" id="fig|935198.13.peg.1360"/>
<dbReference type="HOGENOM" id="CLU_010245_4_1_9"/>
<dbReference type="Proteomes" id="UP000001195">
    <property type="component" value="Chromosome"/>
</dbReference>
<dbReference type="GO" id="GO:0070733">
    <property type="term" value="F:AMPylase activity"/>
    <property type="evidence" value="ECO:0007669"/>
    <property type="project" value="TreeGrafter"/>
</dbReference>
<dbReference type="GO" id="GO:0005524">
    <property type="term" value="F:ATP binding"/>
    <property type="evidence" value="ECO:0007669"/>
    <property type="project" value="UniProtKB-UniRule"/>
</dbReference>
<dbReference type="GO" id="GO:0000287">
    <property type="term" value="F:magnesium ion binding"/>
    <property type="evidence" value="ECO:0007669"/>
    <property type="project" value="UniProtKB-UniRule"/>
</dbReference>
<dbReference type="HAMAP" id="MF_00692">
    <property type="entry name" value="YdiU_SelO"/>
    <property type="match status" value="1"/>
</dbReference>
<dbReference type="InterPro" id="IPR003846">
    <property type="entry name" value="SelO"/>
</dbReference>
<dbReference type="NCBIfam" id="NF000658">
    <property type="entry name" value="PRK00029.1"/>
    <property type="match status" value="1"/>
</dbReference>
<dbReference type="PANTHER" id="PTHR32057">
    <property type="entry name" value="PROTEIN ADENYLYLTRANSFERASE SELO, MITOCHONDRIAL"/>
    <property type="match status" value="1"/>
</dbReference>
<dbReference type="PANTHER" id="PTHR32057:SF14">
    <property type="entry name" value="PROTEIN ADENYLYLTRANSFERASE SELO, MITOCHONDRIAL"/>
    <property type="match status" value="1"/>
</dbReference>
<dbReference type="Pfam" id="PF02696">
    <property type="entry name" value="SelO"/>
    <property type="match status" value="1"/>
</dbReference>